<comment type="function">
    <text evidence="1">Catalyzes the formation of pyridoxal 5'-phosphate from ribose 5-phosphate (RBP), glyceraldehyde 3-phosphate (G3P) and ammonia. The ammonia is provided by the PdxT subunit. Can also use ribulose 5-phosphate and dihydroxyacetone phosphate as substrates, resulting from enzyme-catalyzed isomerization of RBP and G3P, respectively.</text>
</comment>
<comment type="catalytic activity">
    <reaction evidence="1">
        <text>aldehydo-D-ribose 5-phosphate + D-glyceraldehyde 3-phosphate + L-glutamine = pyridoxal 5'-phosphate + L-glutamate + phosphate + 3 H2O + H(+)</text>
        <dbReference type="Rhea" id="RHEA:31507"/>
        <dbReference type="ChEBI" id="CHEBI:15377"/>
        <dbReference type="ChEBI" id="CHEBI:15378"/>
        <dbReference type="ChEBI" id="CHEBI:29985"/>
        <dbReference type="ChEBI" id="CHEBI:43474"/>
        <dbReference type="ChEBI" id="CHEBI:58273"/>
        <dbReference type="ChEBI" id="CHEBI:58359"/>
        <dbReference type="ChEBI" id="CHEBI:59776"/>
        <dbReference type="ChEBI" id="CHEBI:597326"/>
        <dbReference type="EC" id="4.3.3.6"/>
    </reaction>
</comment>
<comment type="pathway">
    <text evidence="1">Cofactor biosynthesis; pyridoxal 5'-phosphate biosynthesis.</text>
</comment>
<comment type="subunit">
    <text evidence="1">In the presence of PdxT, forms a dodecamer of heterodimers.</text>
</comment>
<comment type="similarity">
    <text evidence="1">Belongs to the PdxS/SNZ family.</text>
</comment>
<proteinExistence type="inferred from homology"/>
<accession>A5UBN2</accession>
<protein>
    <recommendedName>
        <fullName evidence="1">Pyridoxal 5'-phosphate synthase subunit PdxS</fullName>
        <shortName evidence="1">PLP synthase subunit PdxS</shortName>
        <ecNumber evidence="1">4.3.3.6</ecNumber>
    </recommendedName>
    <alternativeName>
        <fullName evidence="1">Pdx1</fullName>
    </alternativeName>
</protein>
<feature type="chain" id="PRO_1000070378" description="Pyridoxal 5'-phosphate synthase subunit PdxS">
    <location>
        <begin position="1"/>
        <end position="291"/>
    </location>
</feature>
<feature type="active site" description="Schiff-base intermediate with D-ribose 5-phosphate" evidence="1">
    <location>
        <position position="80"/>
    </location>
</feature>
<feature type="binding site" evidence="1">
    <location>
        <position position="23"/>
    </location>
    <ligand>
        <name>D-ribose 5-phosphate</name>
        <dbReference type="ChEBI" id="CHEBI:78346"/>
    </ligand>
</feature>
<feature type="binding site" evidence="1">
    <location>
        <position position="152"/>
    </location>
    <ligand>
        <name>D-ribose 5-phosphate</name>
        <dbReference type="ChEBI" id="CHEBI:78346"/>
    </ligand>
</feature>
<feature type="binding site" evidence="1">
    <location>
        <position position="164"/>
    </location>
    <ligand>
        <name>D-glyceraldehyde 3-phosphate</name>
        <dbReference type="ChEBI" id="CHEBI:59776"/>
    </ligand>
</feature>
<feature type="binding site" evidence="1">
    <location>
        <position position="213"/>
    </location>
    <ligand>
        <name>D-ribose 5-phosphate</name>
        <dbReference type="ChEBI" id="CHEBI:78346"/>
    </ligand>
</feature>
<feature type="binding site" evidence="1">
    <location>
        <begin position="234"/>
        <end position="235"/>
    </location>
    <ligand>
        <name>D-ribose 5-phosphate</name>
        <dbReference type="ChEBI" id="CHEBI:78346"/>
    </ligand>
</feature>
<reference key="1">
    <citation type="journal article" date="2007" name="Genome Biol.">
        <title>Characterization and modeling of the Haemophilus influenzae core and supragenomes based on the complete genomic sequences of Rd and 12 clinical nontypeable strains.</title>
        <authorList>
            <person name="Hogg J.S."/>
            <person name="Hu F.Z."/>
            <person name="Janto B."/>
            <person name="Boissy R."/>
            <person name="Hayes J."/>
            <person name="Keefe R."/>
            <person name="Post J.C."/>
            <person name="Ehrlich G.D."/>
        </authorList>
    </citation>
    <scope>NUCLEOTIDE SEQUENCE [LARGE SCALE GENOMIC DNA]</scope>
    <source>
        <strain>PittEE</strain>
    </source>
</reference>
<dbReference type="EC" id="4.3.3.6" evidence="1"/>
<dbReference type="EMBL" id="CP000671">
    <property type="protein sequence ID" value="ABQ98183.1"/>
    <property type="molecule type" value="Genomic_DNA"/>
</dbReference>
<dbReference type="SMR" id="A5UBN2"/>
<dbReference type="KEGG" id="hip:CGSHiEE_03820"/>
<dbReference type="HOGENOM" id="CLU_055352_1_0_6"/>
<dbReference type="UniPathway" id="UPA00245"/>
<dbReference type="GO" id="GO:0036381">
    <property type="term" value="F:pyridoxal 5'-phosphate synthase (glutamine hydrolysing) activity"/>
    <property type="evidence" value="ECO:0007669"/>
    <property type="project" value="UniProtKB-UniRule"/>
</dbReference>
<dbReference type="GO" id="GO:0006520">
    <property type="term" value="P:amino acid metabolic process"/>
    <property type="evidence" value="ECO:0007669"/>
    <property type="project" value="TreeGrafter"/>
</dbReference>
<dbReference type="GO" id="GO:0042823">
    <property type="term" value="P:pyridoxal phosphate biosynthetic process"/>
    <property type="evidence" value="ECO:0007669"/>
    <property type="project" value="UniProtKB-UniRule"/>
</dbReference>
<dbReference type="GO" id="GO:0008615">
    <property type="term" value="P:pyridoxine biosynthetic process"/>
    <property type="evidence" value="ECO:0007669"/>
    <property type="project" value="TreeGrafter"/>
</dbReference>
<dbReference type="CDD" id="cd04727">
    <property type="entry name" value="pdxS"/>
    <property type="match status" value="1"/>
</dbReference>
<dbReference type="FunFam" id="3.20.20.70:FF:000001">
    <property type="entry name" value="Pyridoxine biosynthesis protein PDX1"/>
    <property type="match status" value="1"/>
</dbReference>
<dbReference type="Gene3D" id="3.20.20.70">
    <property type="entry name" value="Aldolase class I"/>
    <property type="match status" value="1"/>
</dbReference>
<dbReference type="HAMAP" id="MF_01824">
    <property type="entry name" value="PdxS"/>
    <property type="match status" value="1"/>
</dbReference>
<dbReference type="InterPro" id="IPR013785">
    <property type="entry name" value="Aldolase_TIM"/>
</dbReference>
<dbReference type="InterPro" id="IPR001852">
    <property type="entry name" value="PdxS/SNZ"/>
</dbReference>
<dbReference type="InterPro" id="IPR033755">
    <property type="entry name" value="PdxS/SNZ_N"/>
</dbReference>
<dbReference type="InterPro" id="IPR011060">
    <property type="entry name" value="RibuloseP-bd_barrel"/>
</dbReference>
<dbReference type="NCBIfam" id="NF003215">
    <property type="entry name" value="PRK04180.1"/>
    <property type="match status" value="1"/>
</dbReference>
<dbReference type="NCBIfam" id="TIGR00343">
    <property type="entry name" value="pyridoxal 5'-phosphate synthase lyase subunit PdxS"/>
    <property type="match status" value="1"/>
</dbReference>
<dbReference type="PANTHER" id="PTHR31829">
    <property type="entry name" value="PYRIDOXAL 5'-PHOSPHATE SYNTHASE SUBUNIT SNZ1-RELATED"/>
    <property type="match status" value="1"/>
</dbReference>
<dbReference type="PANTHER" id="PTHR31829:SF0">
    <property type="entry name" value="PYRIDOXAL 5'-PHOSPHATE SYNTHASE SUBUNIT SNZ1-RELATED"/>
    <property type="match status" value="1"/>
</dbReference>
<dbReference type="Pfam" id="PF01680">
    <property type="entry name" value="SOR_SNZ"/>
    <property type="match status" value="1"/>
</dbReference>
<dbReference type="PIRSF" id="PIRSF029271">
    <property type="entry name" value="Pdx1"/>
    <property type="match status" value="1"/>
</dbReference>
<dbReference type="SUPFAM" id="SSF51366">
    <property type="entry name" value="Ribulose-phoshate binding barrel"/>
    <property type="match status" value="1"/>
</dbReference>
<dbReference type="PROSITE" id="PS01235">
    <property type="entry name" value="PDXS_SNZ_1"/>
    <property type="match status" value="1"/>
</dbReference>
<dbReference type="PROSITE" id="PS51129">
    <property type="entry name" value="PDXS_SNZ_2"/>
    <property type="match status" value="1"/>
</dbReference>
<gene>
    <name evidence="1" type="primary">pdxS</name>
    <name type="ordered locus">CGSHiEE_03820</name>
</gene>
<keyword id="KW-0456">Lyase</keyword>
<keyword id="KW-0663">Pyridoxal phosphate</keyword>
<keyword id="KW-0704">Schiff base</keyword>
<organism>
    <name type="scientific">Haemophilus influenzae (strain PittEE)</name>
    <dbReference type="NCBI Taxonomy" id="374930"/>
    <lineage>
        <taxon>Bacteria</taxon>
        <taxon>Pseudomonadati</taxon>
        <taxon>Pseudomonadota</taxon>
        <taxon>Gammaproteobacteria</taxon>
        <taxon>Pasteurellales</taxon>
        <taxon>Pasteurellaceae</taxon>
        <taxon>Haemophilus</taxon>
    </lineage>
</organism>
<evidence type="ECO:0000255" key="1">
    <source>
        <dbReference type="HAMAP-Rule" id="MF_01824"/>
    </source>
</evidence>
<name>PDXS_HAEIE</name>
<sequence>MAENRYELNKNLAQMLKGGVIMDVQNPEQARIAEAAGAAAVMALERIPADIRAVGGVSRMSDPKMIKEIQGAVSIPVMAKVRIGHFVEAQILEAIEIDYIDESEVLSPADNRFHVDKKEFQVPFVCGAKDLGEALRRIAEGASMIRTKGEPGTGDIVQAVRHMRMMSQEIRRIQNLREDELYVAAKDLQVPVELVQYVHKHGKLPVVNFAAGGIATPADAALMMQLGAEGVFVGSGIFKSGDPIKRASAIVKAVTNYRNPQILAQISEDLGEAMVGINENEIQILMAERGK</sequence>